<reference key="1">
    <citation type="journal article" date="2002" name="Nature">
        <title>The genome sequence of Schizosaccharomyces pombe.</title>
        <authorList>
            <person name="Wood V."/>
            <person name="Gwilliam R."/>
            <person name="Rajandream M.A."/>
            <person name="Lyne M.H."/>
            <person name="Lyne R."/>
            <person name="Stewart A."/>
            <person name="Sgouros J.G."/>
            <person name="Peat N."/>
            <person name="Hayles J."/>
            <person name="Baker S.G."/>
            <person name="Basham D."/>
            <person name="Bowman S."/>
            <person name="Brooks K."/>
            <person name="Brown D."/>
            <person name="Brown S."/>
            <person name="Chillingworth T."/>
            <person name="Churcher C.M."/>
            <person name="Collins M."/>
            <person name="Connor R."/>
            <person name="Cronin A."/>
            <person name="Davis P."/>
            <person name="Feltwell T."/>
            <person name="Fraser A."/>
            <person name="Gentles S."/>
            <person name="Goble A."/>
            <person name="Hamlin N."/>
            <person name="Harris D.E."/>
            <person name="Hidalgo J."/>
            <person name="Hodgson G."/>
            <person name="Holroyd S."/>
            <person name="Hornsby T."/>
            <person name="Howarth S."/>
            <person name="Huckle E.J."/>
            <person name="Hunt S."/>
            <person name="Jagels K."/>
            <person name="James K.D."/>
            <person name="Jones L."/>
            <person name="Jones M."/>
            <person name="Leather S."/>
            <person name="McDonald S."/>
            <person name="McLean J."/>
            <person name="Mooney P."/>
            <person name="Moule S."/>
            <person name="Mungall K.L."/>
            <person name="Murphy L.D."/>
            <person name="Niblett D."/>
            <person name="Odell C."/>
            <person name="Oliver K."/>
            <person name="O'Neil S."/>
            <person name="Pearson D."/>
            <person name="Quail M.A."/>
            <person name="Rabbinowitsch E."/>
            <person name="Rutherford K.M."/>
            <person name="Rutter S."/>
            <person name="Saunders D."/>
            <person name="Seeger K."/>
            <person name="Sharp S."/>
            <person name="Skelton J."/>
            <person name="Simmonds M.N."/>
            <person name="Squares R."/>
            <person name="Squares S."/>
            <person name="Stevens K."/>
            <person name="Taylor K."/>
            <person name="Taylor R.G."/>
            <person name="Tivey A."/>
            <person name="Walsh S.V."/>
            <person name="Warren T."/>
            <person name="Whitehead S."/>
            <person name="Woodward J.R."/>
            <person name="Volckaert G."/>
            <person name="Aert R."/>
            <person name="Robben J."/>
            <person name="Grymonprez B."/>
            <person name="Weltjens I."/>
            <person name="Vanstreels E."/>
            <person name="Rieger M."/>
            <person name="Schaefer M."/>
            <person name="Mueller-Auer S."/>
            <person name="Gabel C."/>
            <person name="Fuchs M."/>
            <person name="Duesterhoeft A."/>
            <person name="Fritzc C."/>
            <person name="Holzer E."/>
            <person name="Moestl D."/>
            <person name="Hilbert H."/>
            <person name="Borzym K."/>
            <person name="Langer I."/>
            <person name="Beck A."/>
            <person name="Lehrach H."/>
            <person name="Reinhardt R."/>
            <person name="Pohl T.M."/>
            <person name="Eger P."/>
            <person name="Zimmermann W."/>
            <person name="Wedler H."/>
            <person name="Wambutt R."/>
            <person name="Purnelle B."/>
            <person name="Goffeau A."/>
            <person name="Cadieu E."/>
            <person name="Dreano S."/>
            <person name="Gloux S."/>
            <person name="Lelaure V."/>
            <person name="Mottier S."/>
            <person name="Galibert F."/>
            <person name="Aves S.J."/>
            <person name="Xiang Z."/>
            <person name="Hunt C."/>
            <person name="Moore K."/>
            <person name="Hurst S.M."/>
            <person name="Lucas M."/>
            <person name="Rochet M."/>
            <person name="Gaillardin C."/>
            <person name="Tallada V.A."/>
            <person name="Garzon A."/>
            <person name="Thode G."/>
            <person name="Daga R.R."/>
            <person name="Cruzado L."/>
            <person name="Jimenez J."/>
            <person name="Sanchez M."/>
            <person name="del Rey F."/>
            <person name="Benito J."/>
            <person name="Dominguez A."/>
            <person name="Revuelta J.L."/>
            <person name="Moreno S."/>
            <person name="Armstrong J."/>
            <person name="Forsburg S.L."/>
            <person name="Cerutti L."/>
            <person name="Lowe T."/>
            <person name="McCombie W.R."/>
            <person name="Paulsen I."/>
            <person name="Potashkin J."/>
            <person name="Shpakovski G.V."/>
            <person name="Ussery D."/>
            <person name="Barrell B.G."/>
            <person name="Nurse P."/>
        </authorList>
    </citation>
    <scope>NUCLEOTIDE SEQUENCE [LARGE SCALE GENOMIC DNA]</scope>
    <source>
        <strain>972 / ATCC 24843</strain>
    </source>
</reference>
<sequence>MKIERYFKAIARAFIITFLFSLILQDNGVLARKAKKQDKGAALKSIYDYHVRPYGTVVQSQIAKASPIVDAAKQATVNVKSYYDEHAKPKVENIRYEVNEVIDKKVAPCIKAFNEKARKIGSKVLDGDNLRELYTTGKERIHFFIVDVLIPFFQRVVQEVRTISRDIAEKLQYFWEIHAIPAYHHYKPIIQRGAMDGYMQLRYVFFPAAKATITQMIETSIRFLRTFLDMHIKPQLQHIYESVVEEKSEAFASATSSKILSEMSASMASSSAHYTSSPTILSRTKSVETPVPMEAAEEEPATEYSIPSSVTFNSQNDCFSNAMNYLEHEYETLVSTFTLSVSEHWEDLLRKATDSCQKELEAFEEISNLRVLAVENSLGNLIQKAEESNYDQAIMDLFEYVKDSILRVHERAIKLRTLSDSIRADVAENIEMGINSIREQAAASSEVALAACSGIKHNAEQVNKLNALIQKVYSYITAESEKVGNRYGETLDNVIKQHLSRIGSVASSAVQRLTAVKNSHKLKMVDRSSAELPNFDYLVSDQVHKIVEINDEHADCDDVNFSTASFEIYERSIPTHGADSERKILKRDSLLNEDDEIFNDLNSDKTIKTNQATSTSSSNTQEISYTGTLNDNINEGLSTFPSIDIPASEADNVYSILPIDVSTSEAEGAYSILPIDVPKSVAEETYSFLPSDVPKSEAEKVYSILPIDVPQSVAEETYSFKPSDIPESEAEKIYSILPIDVKDPSLEKDGHVIDSSNLQTDSVKDYSEVSRADNLDASSDTIFSVLHAENEASITKEVHSTPLSDVASSEAEKVYTILPIEVPTDPLPNYSSDVESELTSD</sequence>
<protein>
    <recommendedName>
        <fullName>Uncharacterized protein C21C3.14c</fullName>
    </recommendedName>
</protein>
<dbReference type="EMBL" id="CU329671">
    <property type="protein sequence ID" value="CAB76050.1"/>
    <property type="molecule type" value="Genomic_DNA"/>
</dbReference>
<dbReference type="PIR" id="T50358">
    <property type="entry name" value="T50358"/>
</dbReference>
<dbReference type="RefSeq" id="NP_596594.1">
    <property type="nucleotide sequence ID" value="NM_001022514.2"/>
</dbReference>
<dbReference type="BioGRID" id="277047">
    <property type="interactions" value="16"/>
</dbReference>
<dbReference type="FunCoup" id="Q9P7L0">
    <property type="interactions" value="90"/>
</dbReference>
<dbReference type="iPTMnet" id="Q9P7L0"/>
<dbReference type="PaxDb" id="4896-SPBC21C3.14c.1"/>
<dbReference type="EnsemblFungi" id="SPBC21C3.14c.1">
    <property type="protein sequence ID" value="SPBC21C3.14c.1:pep"/>
    <property type="gene ID" value="SPBC21C3.14c"/>
</dbReference>
<dbReference type="KEGG" id="spo:2540519"/>
<dbReference type="PomBase" id="SPBC21C3.14c"/>
<dbReference type="VEuPathDB" id="FungiDB:SPBC21C3.14c"/>
<dbReference type="HOGENOM" id="CLU_360981_0_0_1"/>
<dbReference type="InParanoid" id="Q9P7L0"/>
<dbReference type="OMA" id="MEFRYVI"/>
<dbReference type="PRO" id="PR:Q9P7L0"/>
<dbReference type="Proteomes" id="UP000002485">
    <property type="component" value="Chromosome II"/>
</dbReference>
<dbReference type="GO" id="GO:0009986">
    <property type="term" value="C:cell surface"/>
    <property type="evidence" value="ECO:0000303"/>
    <property type="project" value="PomBase"/>
</dbReference>
<dbReference type="GO" id="GO:0005576">
    <property type="term" value="C:extracellular region"/>
    <property type="evidence" value="ECO:0007669"/>
    <property type="project" value="UniProtKB-SubCell"/>
</dbReference>
<dbReference type="PANTHER" id="PTHR16112">
    <property type="entry name" value="METHYL-CPG BINDING PROTEIN, DROSOPHILA"/>
    <property type="match status" value="1"/>
</dbReference>
<dbReference type="PANTHER" id="PTHR16112:SF16">
    <property type="entry name" value="SIX-BANDED, ISOFORM H"/>
    <property type="match status" value="1"/>
</dbReference>
<name>YOSE_SCHPO</name>
<gene>
    <name type="ORF">SPBC21C3.14c</name>
</gene>
<accession>Q9P7L0</accession>
<keyword id="KW-1185">Reference proteome</keyword>
<keyword id="KW-0964">Secreted</keyword>
<keyword id="KW-0732">Signal</keyword>
<organism>
    <name type="scientific">Schizosaccharomyces pombe (strain 972 / ATCC 24843)</name>
    <name type="common">Fission yeast</name>
    <dbReference type="NCBI Taxonomy" id="284812"/>
    <lineage>
        <taxon>Eukaryota</taxon>
        <taxon>Fungi</taxon>
        <taxon>Dikarya</taxon>
        <taxon>Ascomycota</taxon>
        <taxon>Taphrinomycotina</taxon>
        <taxon>Schizosaccharomycetes</taxon>
        <taxon>Schizosaccharomycetales</taxon>
        <taxon>Schizosaccharomycetaceae</taxon>
        <taxon>Schizosaccharomyces</taxon>
    </lineage>
</organism>
<proteinExistence type="inferred from homology"/>
<comment type="subcellular location">
    <subcellularLocation>
        <location evidence="2">Secreted</location>
    </subcellularLocation>
</comment>
<evidence type="ECO:0000255" key="1"/>
<evidence type="ECO:0000305" key="2"/>
<feature type="signal peptide" evidence="1">
    <location>
        <begin position="1"/>
        <end position="31"/>
    </location>
</feature>
<feature type="chain" id="PRO_0000304069" description="Uncharacterized protein C21C3.14c">
    <location>
        <begin position="32"/>
        <end position="841"/>
    </location>
</feature>